<protein>
    <recommendedName>
        <fullName evidence="2">Ribosome biogenesis protein YTM1</fullName>
    </recommendedName>
</protein>
<keyword id="KW-0539">Nucleus</keyword>
<keyword id="KW-1185">Reference proteome</keyword>
<keyword id="KW-0677">Repeat</keyword>
<keyword id="KW-0690">Ribosome biogenesis</keyword>
<keyword id="KW-0698">rRNA processing</keyword>
<keyword id="KW-0853">WD repeat</keyword>
<evidence type="ECO:0000250" key="1"/>
<evidence type="ECO:0000255" key="2">
    <source>
        <dbReference type="HAMAP-Rule" id="MF_03029"/>
    </source>
</evidence>
<proteinExistence type="inferred from homology"/>
<reference key="1">
    <citation type="journal article" date="2004" name="Nature">
        <title>Genome evolution in yeasts.</title>
        <authorList>
            <person name="Dujon B."/>
            <person name="Sherman D."/>
            <person name="Fischer G."/>
            <person name="Durrens P."/>
            <person name="Casaregola S."/>
            <person name="Lafontaine I."/>
            <person name="de Montigny J."/>
            <person name="Marck C."/>
            <person name="Neuveglise C."/>
            <person name="Talla E."/>
            <person name="Goffard N."/>
            <person name="Frangeul L."/>
            <person name="Aigle M."/>
            <person name="Anthouard V."/>
            <person name="Babour A."/>
            <person name="Barbe V."/>
            <person name="Barnay S."/>
            <person name="Blanchin S."/>
            <person name="Beckerich J.-M."/>
            <person name="Beyne E."/>
            <person name="Bleykasten C."/>
            <person name="Boisrame A."/>
            <person name="Boyer J."/>
            <person name="Cattolico L."/>
            <person name="Confanioleri F."/>
            <person name="de Daruvar A."/>
            <person name="Despons L."/>
            <person name="Fabre E."/>
            <person name="Fairhead C."/>
            <person name="Ferry-Dumazet H."/>
            <person name="Groppi A."/>
            <person name="Hantraye F."/>
            <person name="Hennequin C."/>
            <person name="Jauniaux N."/>
            <person name="Joyet P."/>
            <person name="Kachouri R."/>
            <person name="Kerrest A."/>
            <person name="Koszul R."/>
            <person name="Lemaire M."/>
            <person name="Lesur I."/>
            <person name="Ma L."/>
            <person name="Muller H."/>
            <person name="Nicaud J.-M."/>
            <person name="Nikolski M."/>
            <person name="Oztas S."/>
            <person name="Ozier-Kalogeropoulos O."/>
            <person name="Pellenz S."/>
            <person name="Potier S."/>
            <person name="Richard G.-F."/>
            <person name="Straub M.-L."/>
            <person name="Suleau A."/>
            <person name="Swennen D."/>
            <person name="Tekaia F."/>
            <person name="Wesolowski-Louvel M."/>
            <person name="Westhof E."/>
            <person name="Wirth B."/>
            <person name="Zeniou-Meyer M."/>
            <person name="Zivanovic Y."/>
            <person name="Bolotin-Fukuhara M."/>
            <person name="Thierry A."/>
            <person name="Bouchier C."/>
            <person name="Caudron B."/>
            <person name="Scarpelli C."/>
            <person name="Gaillardin C."/>
            <person name="Weissenbach J."/>
            <person name="Wincker P."/>
            <person name="Souciet J.-L."/>
        </authorList>
    </citation>
    <scope>NUCLEOTIDE SEQUENCE [LARGE SCALE GENOMIC DNA]</scope>
    <source>
        <strain>ATCC 36239 / CBS 767 / BCRC 21394 / JCM 1990 / NBRC 0083 / IGC 2968</strain>
    </source>
</reference>
<gene>
    <name evidence="2" type="primary">YTM1</name>
    <name type="ordered locus">DEHA2F11066g</name>
</gene>
<dbReference type="EMBL" id="CR382138">
    <property type="protein sequence ID" value="CAG89191.2"/>
    <property type="molecule type" value="Genomic_DNA"/>
</dbReference>
<dbReference type="RefSeq" id="XP_460846.2">
    <property type="nucleotide sequence ID" value="XM_460846.1"/>
</dbReference>
<dbReference type="SMR" id="Q6BLS5"/>
<dbReference type="FunCoup" id="Q6BLS5">
    <property type="interactions" value="986"/>
</dbReference>
<dbReference type="STRING" id="284592.Q6BLS5"/>
<dbReference type="GeneID" id="2903586"/>
<dbReference type="KEGG" id="dha:DEHA2F11066g"/>
<dbReference type="VEuPathDB" id="FungiDB:DEHA2F11066g"/>
<dbReference type="eggNOG" id="KOG0313">
    <property type="taxonomic scope" value="Eukaryota"/>
</dbReference>
<dbReference type="HOGENOM" id="CLU_000288_57_0_1"/>
<dbReference type="InParanoid" id="Q6BLS5"/>
<dbReference type="OMA" id="DHKYVEF"/>
<dbReference type="OrthoDB" id="10251381at2759"/>
<dbReference type="Proteomes" id="UP000000599">
    <property type="component" value="Chromosome F"/>
</dbReference>
<dbReference type="GO" id="GO:0005654">
    <property type="term" value="C:nucleoplasm"/>
    <property type="evidence" value="ECO:0007669"/>
    <property type="project" value="UniProtKB-SubCell"/>
</dbReference>
<dbReference type="GO" id="GO:0070545">
    <property type="term" value="C:PeBoW complex"/>
    <property type="evidence" value="ECO:0007669"/>
    <property type="project" value="EnsemblFungi"/>
</dbReference>
<dbReference type="GO" id="GO:0030687">
    <property type="term" value="C:preribosome, large subunit precursor"/>
    <property type="evidence" value="ECO:0007669"/>
    <property type="project" value="UniProtKB-UniRule"/>
</dbReference>
<dbReference type="GO" id="GO:0043021">
    <property type="term" value="F:ribonucleoprotein complex binding"/>
    <property type="evidence" value="ECO:0007669"/>
    <property type="project" value="UniProtKB-UniRule"/>
</dbReference>
<dbReference type="GO" id="GO:0051276">
    <property type="term" value="P:chromosome organization"/>
    <property type="evidence" value="ECO:0007669"/>
    <property type="project" value="EnsemblFungi"/>
</dbReference>
<dbReference type="GO" id="GO:0000466">
    <property type="term" value="P:maturation of 5.8S rRNA from tricistronic rRNA transcript (SSU-rRNA, 5.8S rRNA, LSU-rRNA)"/>
    <property type="evidence" value="ECO:0007669"/>
    <property type="project" value="UniProtKB-UniRule"/>
</dbReference>
<dbReference type="GO" id="GO:0000463">
    <property type="term" value="P:maturation of LSU-rRNA from tricistronic rRNA transcript (SSU-rRNA, 5.8S rRNA, LSU-rRNA)"/>
    <property type="evidence" value="ECO:0007669"/>
    <property type="project" value="UniProtKB-UniRule"/>
</dbReference>
<dbReference type="GO" id="GO:0110136">
    <property type="term" value="P:protein-RNA complex remodeling"/>
    <property type="evidence" value="ECO:0007669"/>
    <property type="project" value="EnsemblFungi"/>
</dbReference>
<dbReference type="CDD" id="cd00200">
    <property type="entry name" value="WD40"/>
    <property type="match status" value="1"/>
</dbReference>
<dbReference type="FunFam" id="2.130.10.10:FF:000706">
    <property type="entry name" value="Ribosome biogenesis protein YTM1"/>
    <property type="match status" value="1"/>
</dbReference>
<dbReference type="Gene3D" id="2.130.10.10">
    <property type="entry name" value="YVTN repeat-like/Quinoprotein amine dehydrogenase"/>
    <property type="match status" value="1"/>
</dbReference>
<dbReference type="HAMAP" id="MF_03029">
    <property type="entry name" value="WDR12"/>
    <property type="match status" value="1"/>
</dbReference>
<dbReference type="InterPro" id="IPR020472">
    <property type="entry name" value="G-protein_beta_WD-40_rep"/>
</dbReference>
<dbReference type="InterPro" id="IPR012972">
    <property type="entry name" value="NLE"/>
</dbReference>
<dbReference type="InterPro" id="IPR015943">
    <property type="entry name" value="WD40/YVTN_repeat-like_dom_sf"/>
</dbReference>
<dbReference type="InterPro" id="IPR036322">
    <property type="entry name" value="WD40_repeat_dom_sf"/>
</dbReference>
<dbReference type="InterPro" id="IPR001680">
    <property type="entry name" value="WD40_rpt"/>
</dbReference>
<dbReference type="InterPro" id="IPR028599">
    <property type="entry name" value="WDR12/Ytm1"/>
</dbReference>
<dbReference type="PANTHER" id="PTHR19855:SF11">
    <property type="entry name" value="RIBOSOME BIOGENESIS PROTEIN WDR12"/>
    <property type="match status" value="1"/>
</dbReference>
<dbReference type="PANTHER" id="PTHR19855">
    <property type="entry name" value="WD40 REPEAT PROTEIN 12, 37"/>
    <property type="match status" value="1"/>
</dbReference>
<dbReference type="Pfam" id="PF08154">
    <property type="entry name" value="NLE"/>
    <property type="match status" value="1"/>
</dbReference>
<dbReference type="Pfam" id="PF00400">
    <property type="entry name" value="WD40"/>
    <property type="match status" value="4"/>
</dbReference>
<dbReference type="PRINTS" id="PR00320">
    <property type="entry name" value="GPROTEINBRPT"/>
</dbReference>
<dbReference type="SMART" id="SM00320">
    <property type="entry name" value="WD40"/>
    <property type="match status" value="7"/>
</dbReference>
<dbReference type="SUPFAM" id="SSF50978">
    <property type="entry name" value="WD40 repeat-like"/>
    <property type="match status" value="1"/>
</dbReference>
<dbReference type="PROSITE" id="PS50082">
    <property type="entry name" value="WD_REPEATS_2"/>
    <property type="match status" value="4"/>
</dbReference>
<dbReference type="PROSITE" id="PS50294">
    <property type="entry name" value="WD_REPEATS_REGION"/>
    <property type="match status" value="1"/>
</dbReference>
<name>YTM1_DEBHA</name>
<feature type="chain" id="PRO_0000369587" description="Ribosome biogenesis protein YTM1">
    <location>
        <begin position="1"/>
        <end position="466"/>
    </location>
</feature>
<feature type="repeat" description="WD 1">
    <location>
        <begin position="120"/>
        <end position="159"/>
    </location>
</feature>
<feature type="repeat" description="WD 2">
    <location>
        <begin position="161"/>
        <end position="199"/>
    </location>
</feature>
<feature type="repeat" description="WD 3">
    <location>
        <begin position="214"/>
        <end position="253"/>
    </location>
</feature>
<feature type="repeat" description="WD 4">
    <location>
        <begin position="291"/>
        <end position="331"/>
    </location>
</feature>
<feature type="repeat" description="WD 5">
    <location>
        <begin position="333"/>
        <end position="372"/>
    </location>
</feature>
<feature type="repeat" description="WD 6">
    <location>
        <begin position="381"/>
        <end position="421"/>
    </location>
</feature>
<feature type="repeat" description="WD 7">
    <location>
        <begin position="431"/>
        <end position="466"/>
    </location>
</feature>
<feature type="region of interest" description="Ubiquitin-like (UBL) domain" evidence="2">
    <location>
        <begin position="8"/>
        <end position="95"/>
    </location>
</feature>
<feature type="region of interest" description="Sufficient for interaction with ERB1 and association with 66S pre-ribosomes" evidence="1">
    <location>
        <begin position="105"/>
        <end position="466"/>
    </location>
</feature>
<sequence>MADDKSQIKINFFTNEEDESLHTSDAPLYVPVSLKRYGLSEIVNHLLKKDGETDETKPVPFDFLIDGVLLRTSLEDYLVKNGLSSEASLNLEYTRAVLPPSFLASFNNDDWISSLDTINPLSASVKASNMSISQPKILSGSYDGIVRTYNMSGKVEKQYVGHSGPIRSVKWISPTRIVSSGNDRQVRLWKTSIDSNIEDDEEIEDGRTLAILEGHKAPVVSLAVEYQNNRILSAGYDKAIGFWSTNYREMTTIQPLEYDSNVISTSSKKRRKMALQDSTIRRRSPLSFLEGHSQPVEDVIFDFNDATVGYSVSQDHTIKTWDLVTSRCVDTRTTGYSLLSLLQLPSLNLLVCGSSARHINLFDPRVSSTTTEQTNNQKLIGHTNFVVGLSKCPTNDNMFASCSHDGTVKVWDVRSEKSLYTITREQNNAAKGQDKVFSVIWDNDIGIISGGQDKKIQINKGSDITK</sequence>
<organism>
    <name type="scientific">Debaryomyces hansenii (strain ATCC 36239 / CBS 767 / BCRC 21394 / JCM 1990 / NBRC 0083 / IGC 2968)</name>
    <name type="common">Yeast</name>
    <name type="synonym">Torulaspora hansenii</name>
    <dbReference type="NCBI Taxonomy" id="284592"/>
    <lineage>
        <taxon>Eukaryota</taxon>
        <taxon>Fungi</taxon>
        <taxon>Dikarya</taxon>
        <taxon>Ascomycota</taxon>
        <taxon>Saccharomycotina</taxon>
        <taxon>Pichiomycetes</taxon>
        <taxon>Debaryomycetaceae</taxon>
        <taxon>Debaryomyces</taxon>
    </lineage>
</organism>
<comment type="function">
    <text evidence="2">Component of the NOP7 complex, which is required for maturation of the 25S and 5.8S ribosomal RNAs and formation of the 60S ribosome.</text>
</comment>
<comment type="subunit">
    <text evidence="2">Component of the NOP7 complex, composed of ERB1, NOP7 and YTM1. The complex is held together by ERB1, which interacts with NOP7 via its N-terminal domain and with YTM1 via a high-affinity interaction between the seven-bladed beta-propeller domains of the 2 proteins. The NOP7 complex associates with the 66S pre-ribosome. Interacts (via UBL domain) with MDN1 (via VWFA/MIDAS domain).</text>
</comment>
<comment type="subcellular location">
    <subcellularLocation>
        <location evidence="2">Nucleus</location>
        <location evidence="2">Nucleolus</location>
    </subcellularLocation>
    <subcellularLocation>
        <location evidence="2">Nucleus</location>
        <location evidence="2">Nucleoplasm</location>
    </subcellularLocation>
</comment>
<comment type="similarity">
    <text evidence="2">Belongs to the WD repeat WDR12/YTM1 family.</text>
</comment>
<accession>Q6BLS5</accession>